<accession>Q0HD77</accession>
<gene>
    <name evidence="1" type="primary">atpA</name>
    <name type="ordered locus">Shewmr4_3927</name>
</gene>
<sequence>MQLNSTEISDLIKQRIEQFEVVSESRNEGTIVAVSDGIIRIHGLADVMQGEMIELPGSRFAIALNLERDSVGAVVMGPYADLAEGVKVKTTGRILEVPVGRGLLGRVVNTLGEPIDGKGAIDNDGFSPVEVIAPGVIERKSVDQPVQTGYKAVDAMIPIGRGQRELIIGDRQTGKTAMAIDAIINQRDSGIKCVYVAVGQKASTIANVVRKLEEHGALANTIVVVATASEAAALQYLAPYSGCAMGEYFRDRGEDALIVYDDLSKQAVAYRQISLLLKRPPGREAYPGDVFYLHSRLLERASRVNEEYVEKFTKGAVTGQTGSLTALPIIETQAGDVSAFVPTNVISITDGQIFLETDLFNSGLRPAVNPGISVSRVGGAAQTKIIKKLSGGIRTALAQYRELAAFSQFASDLDDATRAQLEHGVRVTELMKQKQYAPMSVAAQAVSIFAAEKGYLKGVELNKVGDFEAALLSYMNSEHAALIKLINETGDYNADIEAELKAGLDKFVATQTW</sequence>
<evidence type="ECO:0000255" key="1">
    <source>
        <dbReference type="HAMAP-Rule" id="MF_01346"/>
    </source>
</evidence>
<proteinExistence type="inferred from homology"/>
<dbReference type="EC" id="7.1.2.2" evidence="1"/>
<dbReference type="EMBL" id="CP000446">
    <property type="protein sequence ID" value="ABI40990.1"/>
    <property type="molecule type" value="Genomic_DNA"/>
</dbReference>
<dbReference type="RefSeq" id="WP_011624648.1">
    <property type="nucleotide sequence ID" value="NC_008321.1"/>
</dbReference>
<dbReference type="SMR" id="Q0HD77"/>
<dbReference type="KEGG" id="she:Shewmr4_3927"/>
<dbReference type="HOGENOM" id="CLU_010091_2_1_6"/>
<dbReference type="GO" id="GO:0005886">
    <property type="term" value="C:plasma membrane"/>
    <property type="evidence" value="ECO:0007669"/>
    <property type="project" value="UniProtKB-SubCell"/>
</dbReference>
<dbReference type="GO" id="GO:0045259">
    <property type="term" value="C:proton-transporting ATP synthase complex"/>
    <property type="evidence" value="ECO:0007669"/>
    <property type="project" value="UniProtKB-KW"/>
</dbReference>
<dbReference type="GO" id="GO:0043531">
    <property type="term" value="F:ADP binding"/>
    <property type="evidence" value="ECO:0007669"/>
    <property type="project" value="TreeGrafter"/>
</dbReference>
<dbReference type="GO" id="GO:0005524">
    <property type="term" value="F:ATP binding"/>
    <property type="evidence" value="ECO:0007669"/>
    <property type="project" value="UniProtKB-UniRule"/>
</dbReference>
<dbReference type="GO" id="GO:0046933">
    <property type="term" value="F:proton-transporting ATP synthase activity, rotational mechanism"/>
    <property type="evidence" value="ECO:0007669"/>
    <property type="project" value="UniProtKB-UniRule"/>
</dbReference>
<dbReference type="CDD" id="cd18113">
    <property type="entry name" value="ATP-synt_F1_alpha_C"/>
    <property type="match status" value="1"/>
</dbReference>
<dbReference type="CDD" id="cd18116">
    <property type="entry name" value="ATP-synt_F1_alpha_N"/>
    <property type="match status" value="1"/>
</dbReference>
<dbReference type="CDD" id="cd01132">
    <property type="entry name" value="F1-ATPase_alpha_CD"/>
    <property type="match status" value="1"/>
</dbReference>
<dbReference type="FunFam" id="1.20.150.20:FF:000001">
    <property type="entry name" value="ATP synthase subunit alpha"/>
    <property type="match status" value="1"/>
</dbReference>
<dbReference type="FunFam" id="2.40.30.20:FF:000001">
    <property type="entry name" value="ATP synthase subunit alpha"/>
    <property type="match status" value="1"/>
</dbReference>
<dbReference type="FunFam" id="3.40.50.300:FF:000002">
    <property type="entry name" value="ATP synthase subunit alpha"/>
    <property type="match status" value="1"/>
</dbReference>
<dbReference type="Gene3D" id="2.40.30.20">
    <property type="match status" value="1"/>
</dbReference>
<dbReference type="Gene3D" id="1.20.150.20">
    <property type="entry name" value="ATP synthase alpha/beta chain, C-terminal domain"/>
    <property type="match status" value="1"/>
</dbReference>
<dbReference type="Gene3D" id="3.40.50.300">
    <property type="entry name" value="P-loop containing nucleotide triphosphate hydrolases"/>
    <property type="match status" value="1"/>
</dbReference>
<dbReference type="HAMAP" id="MF_01346">
    <property type="entry name" value="ATP_synth_alpha_bact"/>
    <property type="match status" value="1"/>
</dbReference>
<dbReference type="InterPro" id="IPR023366">
    <property type="entry name" value="ATP_synth_asu-like_sf"/>
</dbReference>
<dbReference type="InterPro" id="IPR000793">
    <property type="entry name" value="ATP_synth_asu_C"/>
</dbReference>
<dbReference type="InterPro" id="IPR038376">
    <property type="entry name" value="ATP_synth_asu_C_sf"/>
</dbReference>
<dbReference type="InterPro" id="IPR033732">
    <property type="entry name" value="ATP_synth_F1_a_nt-bd_dom"/>
</dbReference>
<dbReference type="InterPro" id="IPR005294">
    <property type="entry name" value="ATP_synth_F1_asu"/>
</dbReference>
<dbReference type="InterPro" id="IPR020003">
    <property type="entry name" value="ATPase_a/bsu_AS"/>
</dbReference>
<dbReference type="InterPro" id="IPR004100">
    <property type="entry name" value="ATPase_F1/V1/A1_a/bsu_N"/>
</dbReference>
<dbReference type="InterPro" id="IPR036121">
    <property type="entry name" value="ATPase_F1/V1/A1_a/bsu_N_sf"/>
</dbReference>
<dbReference type="InterPro" id="IPR000194">
    <property type="entry name" value="ATPase_F1/V1/A1_a/bsu_nucl-bd"/>
</dbReference>
<dbReference type="InterPro" id="IPR027417">
    <property type="entry name" value="P-loop_NTPase"/>
</dbReference>
<dbReference type="NCBIfam" id="TIGR00962">
    <property type="entry name" value="atpA"/>
    <property type="match status" value="1"/>
</dbReference>
<dbReference type="NCBIfam" id="NF009884">
    <property type="entry name" value="PRK13343.1"/>
    <property type="match status" value="1"/>
</dbReference>
<dbReference type="PANTHER" id="PTHR48082">
    <property type="entry name" value="ATP SYNTHASE SUBUNIT ALPHA, MITOCHONDRIAL"/>
    <property type="match status" value="1"/>
</dbReference>
<dbReference type="PANTHER" id="PTHR48082:SF2">
    <property type="entry name" value="ATP SYNTHASE SUBUNIT ALPHA, MITOCHONDRIAL"/>
    <property type="match status" value="1"/>
</dbReference>
<dbReference type="Pfam" id="PF00006">
    <property type="entry name" value="ATP-synt_ab"/>
    <property type="match status" value="1"/>
</dbReference>
<dbReference type="Pfam" id="PF00306">
    <property type="entry name" value="ATP-synt_ab_C"/>
    <property type="match status" value="1"/>
</dbReference>
<dbReference type="Pfam" id="PF02874">
    <property type="entry name" value="ATP-synt_ab_N"/>
    <property type="match status" value="1"/>
</dbReference>
<dbReference type="SUPFAM" id="SSF47917">
    <property type="entry name" value="C-terminal domain of alpha and beta subunits of F1 ATP synthase"/>
    <property type="match status" value="1"/>
</dbReference>
<dbReference type="SUPFAM" id="SSF50615">
    <property type="entry name" value="N-terminal domain of alpha and beta subunits of F1 ATP synthase"/>
    <property type="match status" value="1"/>
</dbReference>
<dbReference type="SUPFAM" id="SSF52540">
    <property type="entry name" value="P-loop containing nucleoside triphosphate hydrolases"/>
    <property type="match status" value="1"/>
</dbReference>
<dbReference type="PROSITE" id="PS00152">
    <property type="entry name" value="ATPASE_ALPHA_BETA"/>
    <property type="match status" value="1"/>
</dbReference>
<feature type="chain" id="PRO_0000302700" description="ATP synthase subunit alpha">
    <location>
        <begin position="1"/>
        <end position="513"/>
    </location>
</feature>
<feature type="binding site" evidence="1">
    <location>
        <begin position="169"/>
        <end position="176"/>
    </location>
    <ligand>
        <name>ATP</name>
        <dbReference type="ChEBI" id="CHEBI:30616"/>
    </ligand>
</feature>
<feature type="site" description="Required for activity" evidence="1">
    <location>
        <position position="373"/>
    </location>
</feature>
<reference key="1">
    <citation type="submission" date="2006-08" db="EMBL/GenBank/DDBJ databases">
        <title>Complete sequence of Shewanella sp. MR-4.</title>
        <authorList>
            <consortium name="US DOE Joint Genome Institute"/>
            <person name="Copeland A."/>
            <person name="Lucas S."/>
            <person name="Lapidus A."/>
            <person name="Barry K."/>
            <person name="Detter J.C."/>
            <person name="Glavina del Rio T."/>
            <person name="Hammon N."/>
            <person name="Israni S."/>
            <person name="Dalin E."/>
            <person name="Tice H."/>
            <person name="Pitluck S."/>
            <person name="Kiss H."/>
            <person name="Brettin T."/>
            <person name="Bruce D."/>
            <person name="Han C."/>
            <person name="Tapia R."/>
            <person name="Gilna P."/>
            <person name="Schmutz J."/>
            <person name="Larimer F."/>
            <person name="Land M."/>
            <person name="Hauser L."/>
            <person name="Kyrpides N."/>
            <person name="Mikhailova N."/>
            <person name="Nealson K."/>
            <person name="Konstantinidis K."/>
            <person name="Klappenbach J."/>
            <person name="Tiedje J."/>
            <person name="Richardson P."/>
        </authorList>
    </citation>
    <scope>NUCLEOTIDE SEQUENCE [LARGE SCALE GENOMIC DNA]</scope>
    <source>
        <strain>MR-4</strain>
    </source>
</reference>
<organism>
    <name type="scientific">Shewanella sp. (strain MR-4)</name>
    <dbReference type="NCBI Taxonomy" id="60480"/>
    <lineage>
        <taxon>Bacteria</taxon>
        <taxon>Pseudomonadati</taxon>
        <taxon>Pseudomonadota</taxon>
        <taxon>Gammaproteobacteria</taxon>
        <taxon>Alteromonadales</taxon>
        <taxon>Shewanellaceae</taxon>
        <taxon>Shewanella</taxon>
    </lineage>
</organism>
<comment type="function">
    <text evidence="1">Produces ATP from ADP in the presence of a proton gradient across the membrane. The alpha chain is a regulatory subunit.</text>
</comment>
<comment type="catalytic activity">
    <reaction evidence="1">
        <text>ATP + H2O + 4 H(+)(in) = ADP + phosphate + 5 H(+)(out)</text>
        <dbReference type="Rhea" id="RHEA:57720"/>
        <dbReference type="ChEBI" id="CHEBI:15377"/>
        <dbReference type="ChEBI" id="CHEBI:15378"/>
        <dbReference type="ChEBI" id="CHEBI:30616"/>
        <dbReference type="ChEBI" id="CHEBI:43474"/>
        <dbReference type="ChEBI" id="CHEBI:456216"/>
        <dbReference type="EC" id="7.1.2.2"/>
    </reaction>
</comment>
<comment type="subunit">
    <text evidence="1">F-type ATPases have 2 components, CF(1) - the catalytic core - and CF(0) - the membrane proton channel. CF(1) has five subunits: alpha(3), beta(3), gamma(1), delta(1), epsilon(1). CF(0) has three main subunits: a(1), b(2) and c(9-12). The alpha and beta chains form an alternating ring which encloses part of the gamma chain. CF(1) is attached to CF(0) by a central stalk formed by the gamma and epsilon chains, while a peripheral stalk is formed by the delta and b chains.</text>
</comment>
<comment type="subcellular location">
    <subcellularLocation>
        <location evidence="1">Cell inner membrane</location>
        <topology evidence="1">Peripheral membrane protein</topology>
    </subcellularLocation>
</comment>
<comment type="similarity">
    <text evidence="1">Belongs to the ATPase alpha/beta chains family.</text>
</comment>
<name>ATPA_SHESM</name>
<protein>
    <recommendedName>
        <fullName evidence="1">ATP synthase subunit alpha</fullName>
        <ecNumber evidence="1">7.1.2.2</ecNumber>
    </recommendedName>
    <alternativeName>
        <fullName evidence="1">ATP synthase F1 sector subunit alpha</fullName>
    </alternativeName>
    <alternativeName>
        <fullName evidence="1">F-ATPase subunit alpha</fullName>
    </alternativeName>
</protein>
<keyword id="KW-0066">ATP synthesis</keyword>
<keyword id="KW-0067">ATP-binding</keyword>
<keyword id="KW-0997">Cell inner membrane</keyword>
<keyword id="KW-1003">Cell membrane</keyword>
<keyword id="KW-0139">CF(1)</keyword>
<keyword id="KW-0375">Hydrogen ion transport</keyword>
<keyword id="KW-0406">Ion transport</keyword>
<keyword id="KW-0472">Membrane</keyword>
<keyword id="KW-0547">Nucleotide-binding</keyword>
<keyword id="KW-1278">Translocase</keyword>
<keyword id="KW-0813">Transport</keyword>